<gene>
    <name type="ordered locus">MA_0511</name>
</gene>
<comment type="similarity">
    <text evidence="1">Belongs to the UPF0228 family.</text>
</comment>
<proteinExistence type="inferred from homology"/>
<evidence type="ECO:0000305" key="1"/>
<name>Y511_METAC</name>
<protein>
    <recommendedName>
        <fullName>UPF0228 protein MA_0511</fullName>
    </recommendedName>
</protein>
<dbReference type="EMBL" id="AE010299">
    <property type="protein sequence ID" value="AAM03955.1"/>
    <property type="molecule type" value="Genomic_DNA"/>
</dbReference>
<dbReference type="RefSeq" id="WP_011020560.1">
    <property type="nucleotide sequence ID" value="NC_003552.1"/>
</dbReference>
<dbReference type="EnsemblBacteria" id="AAM03955">
    <property type="protein sequence ID" value="AAM03955"/>
    <property type="gene ID" value="MA_0511"/>
</dbReference>
<dbReference type="GeneID" id="1472403"/>
<dbReference type="KEGG" id="mac:MA_0511"/>
<dbReference type="HOGENOM" id="CLU_106567_0_0_2"/>
<dbReference type="InParanoid" id="Q8TTC6"/>
<dbReference type="OrthoDB" id="136726at2157"/>
<dbReference type="PhylomeDB" id="Q8TTC6"/>
<dbReference type="Proteomes" id="UP000002487">
    <property type="component" value="Chromosome"/>
</dbReference>
<dbReference type="InterPro" id="IPR008887">
    <property type="entry name" value="UPF0228"/>
</dbReference>
<dbReference type="Pfam" id="PF05727">
    <property type="entry name" value="UPF0228"/>
    <property type="match status" value="1"/>
</dbReference>
<sequence length="204" mass="23928">MSKINKEIAIFIVFLILVALWGLFVKVPVEETKTPDPESQVSGMTIQFKDGISESEVRTILQNCNMTRNYRMTYDNSSEDYYIMADKDNWSDIRRELVDEMKETNKKNWTVSTPAHVIRKEDYYVLPISGQAIKDEKFLAILDKYDIGVEKFLWCDISFLYSDGPLTYWIPKEDAIRIKNELEQNDNIFSVQFDYLFPPFDPTT</sequence>
<reference key="1">
    <citation type="journal article" date="2002" name="Genome Res.">
        <title>The genome of Methanosarcina acetivorans reveals extensive metabolic and physiological diversity.</title>
        <authorList>
            <person name="Galagan J.E."/>
            <person name="Nusbaum C."/>
            <person name="Roy A."/>
            <person name="Endrizzi M.G."/>
            <person name="Macdonald P."/>
            <person name="FitzHugh W."/>
            <person name="Calvo S."/>
            <person name="Engels R."/>
            <person name="Smirnov S."/>
            <person name="Atnoor D."/>
            <person name="Brown A."/>
            <person name="Allen N."/>
            <person name="Naylor J."/>
            <person name="Stange-Thomann N."/>
            <person name="DeArellano K."/>
            <person name="Johnson R."/>
            <person name="Linton L."/>
            <person name="McEwan P."/>
            <person name="McKernan K."/>
            <person name="Talamas J."/>
            <person name="Tirrell A."/>
            <person name="Ye W."/>
            <person name="Zimmer A."/>
            <person name="Barber R.D."/>
            <person name="Cann I."/>
            <person name="Graham D.E."/>
            <person name="Grahame D.A."/>
            <person name="Guss A.M."/>
            <person name="Hedderich R."/>
            <person name="Ingram-Smith C."/>
            <person name="Kuettner H.C."/>
            <person name="Krzycki J.A."/>
            <person name="Leigh J.A."/>
            <person name="Li W."/>
            <person name="Liu J."/>
            <person name="Mukhopadhyay B."/>
            <person name="Reeve J.N."/>
            <person name="Smith K."/>
            <person name="Springer T.A."/>
            <person name="Umayam L.A."/>
            <person name="White O."/>
            <person name="White R.H."/>
            <person name="de Macario E.C."/>
            <person name="Ferry J.G."/>
            <person name="Jarrell K.F."/>
            <person name="Jing H."/>
            <person name="Macario A.J.L."/>
            <person name="Paulsen I.T."/>
            <person name="Pritchett M."/>
            <person name="Sowers K.R."/>
            <person name="Swanson R.V."/>
            <person name="Zinder S.H."/>
            <person name="Lander E."/>
            <person name="Metcalf W.W."/>
            <person name="Birren B."/>
        </authorList>
    </citation>
    <scope>NUCLEOTIDE SEQUENCE [LARGE SCALE GENOMIC DNA]</scope>
    <source>
        <strain>ATCC 35395 / DSM 2834 / JCM 12185 / C2A</strain>
    </source>
</reference>
<feature type="chain" id="PRO_0000220394" description="UPF0228 protein MA_0511">
    <location>
        <begin position="1"/>
        <end position="204"/>
    </location>
</feature>
<accession>Q8TTC6</accession>
<organism>
    <name type="scientific">Methanosarcina acetivorans (strain ATCC 35395 / DSM 2834 / JCM 12185 / C2A)</name>
    <dbReference type="NCBI Taxonomy" id="188937"/>
    <lineage>
        <taxon>Archaea</taxon>
        <taxon>Methanobacteriati</taxon>
        <taxon>Methanobacteriota</taxon>
        <taxon>Stenosarchaea group</taxon>
        <taxon>Methanomicrobia</taxon>
        <taxon>Methanosarcinales</taxon>
        <taxon>Methanosarcinaceae</taxon>
        <taxon>Methanosarcina</taxon>
    </lineage>
</organism>
<keyword id="KW-1185">Reference proteome</keyword>